<evidence type="ECO:0000250" key="1"/>
<evidence type="ECO:0000255" key="2"/>
<evidence type="ECO:0000305" key="3"/>
<evidence type="ECO:0000312" key="4">
    <source>
        <dbReference type="WormBase" id="T20F5.3"/>
    </source>
</evidence>
<name>RRFM_CAEEL</name>
<comment type="function">
    <text evidence="1">Responsible for the release of ribosomes from messenger RNA at the termination of protein biosynthesis. May increase the efficiency of translation by recycling ribosomes from one round of translation to another (By similarity).</text>
</comment>
<comment type="subcellular location">
    <subcellularLocation>
        <location evidence="1">Mitochondrion</location>
    </subcellularLocation>
</comment>
<comment type="similarity">
    <text evidence="3">Belongs to the RRF family.</text>
</comment>
<organism>
    <name type="scientific">Caenorhabditis elegans</name>
    <dbReference type="NCBI Taxonomy" id="6239"/>
    <lineage>
        <taxon>Eukaryota</taxon>
        <taxon>Metazoa</taxon>
        <taxon>Ecdysozoa</taxon>
        <taxon>Nematoda</taxon>
        <taxon>Chromadorea</taxon>
        <taxon>Rhabditida</taxon>
        <taxon>Rhabditina</taxon>
        <taxon>Rhabditomorpha</taxon>
        <taxon>Rhabditoidea</taxon>
        <taxon>Rhabditidae</taxon>
        <taxon>Peloderinae</taxon>
        <taxon>Caenorhabditis</taxon>
    </lineage>
</organism>
<keyword id="KW-0496">Mitochondrion</keyword>
<keyword id="KW-0648">Protein biosynthesis</keyword>
<keyword id="KW-1185">Reference proteome</keyword>
<keyword id="KW-0809">Transit peptide</keyword>
<reference key="1">
    <citation type="journal article" date="1998" name="Science">
        <title>Genome sequence of the nematode C. elegans: a platform for investigating biology.</title>
        <authorList>
            <consortium name="The C. elegans sequencing consortium"/>
        </authorList>
    </citation>
    <scope>NUCLEOTIDE SEQUENCE [LARGE SCALE GENOMIC DNA]</scope>
    <source>
        <strain>Bristol N2</strain>
    </source>
</reference>
<protein>
    <recommendedName>
        <fullName>Ribosome-recycling factor, mitochondrial</fullName>
        <shortName>RRF</shortName>
    </recommendedName>
    <alternativeName>
        <fullName>Ribosome-releasing factor, mitochondrial</fullName>
    </alternativeName>
</protein>
<dbReference type="EMBL" id="FO080916">
    <property type="protein sequence ID" value="CCD67783.1"/>
    <property type="molecule type" value="Genomic_DNA"/>
</dbReference>
<dbReference type="PIR" id="T29207">
    <property type="entry name" value="T29207"/>
</dbReference>
<dbReference type="RefSeq" id="NP_491262.2">
    <property type="nucleotide sequence ID" value="NM_058861.8"/>
</dbReference>
<dbReference type="SMR" id="P91478"/>
<dbReference type="FunCoup" id="P91478">
    <property type="interactions" value="674"/>
</dbReference>
<dbReference type="STRING" id="6239.T20F5.3.2"/>
<dbReference type="PaxDb" id="6239-T20F5.3.1"/>
<dbReference type="PeptideAtlas" id="P91478"/>
<dbReference type="EnsemblMetazoa" id="T20F5.3.1">
    <property type="protein sequence ID" value="T20F5.3.1"/>
    <property type="gene ID" value="WBGene00020625"/>
</dbReference>
<dbReference type="GeneID" id="171976"/>
<dbReference type="KEGG" id="cel:CELE_T20F5.3"/>
<dbReference type="UCSC" id="T20F5.3">
    <property type="organism name" value="c. elegans"/>
</dbReference>
<dbReference type="AGR" id="WB:WBGene00020625"/>
<dbReference type="CTD" id="171976"/>
<dbReference type="WormBase" id="T20F5.3">
    <property type="protein sequence ID" value="CE40717"/>
    <property type="gene ID" value="WBGene00020625"/>
    <property type="gene designation" value="mrrf-1"/>
</dbReference>
<dbReference type="eggNOG" id="KOG4759">
    <property type="taxonomic scope" value="Eukaryota"/>
</dbReference>
<dbReference type="GeneTree" id="ENSGT00390000005084"/>
<dbReference type="HOGENOM" id="CLU_1166776_0_0_1"/>
<dbReference type="InParanoid" id="P91478"/>
<dbReference type="OMA" id="VYSKYDR"/>
<dbReference type="OrthoDB" id="407355at2759"/>
<dbReference type="PhylomeDB" id="P91478"/>
<dbReference type="Reactome" id="R-CEL-5419276">
    <property type="pathway name" value="Mitochondrial translation termination"/>
</dbReference>
<dbReference type="PRO" id="PR:P91478"/>
<dbReference type="Proteomes" id="UP000001940">
    <property type="component" value="Chromosome I"/>
</dbReference>
<dbReference type="Bgee" id="WBGene00020625">
    <property type="expression patterns" value="Expressed in germ line (C elegans) and 4 other cell types or tissues"/>
</dbReference>
<dbReference type="GO" id="GO:0005739">
    <property type="term" value="C:mitochondrion"/>
    <property type="evidence" value="ECO:0000318"/>
    <property type="project" value="GO_Central"/>
</dbReference>
<dbReference type="GO" id="GO:0043023">
    <property type="term" value="F:ribosomal large subunit binding"/>
    <property type="evidence" value="ECO:0000318"/>
    <property type="project" value="GO_Central"/>
</dbReference>
<dbReference type="GO" id="GO:0006412">
    <property type="term" value="P:translation"/>
    <property type="evidence" value="ECO:0000318"/>
    <property type="project" value="GO_Central"/>
</dbReference>
<dbReference type="FunFam" id="3.30.1360.40:FF:000007">
    <property type="entry name" value="ribosome-recycling factor, mitochondrial isoform X1"/>
    <property type="match status" value="1"/>
</dbReference>
<dbReference type="Gene3D" id="3.30.1360.40">
    <property type="match status" value="1"/>
</dbReference>
<dbReference type="Gene3D" id="1.10.132.20">
    <property type="entry name" value="Ribosome-recycling factor"/>
    <property type="match status" value="1"/>
</dbReference>
<dbReference type="InterPro" id="IPR002661">
    <property type="entry name" value="Ribosome_recyc_fac"/>
</dbReference>
<dbReference type="InterPro" id="IPR023584">
    <property type="entry name" value="Ribosome_recyc_fac_dom"/>
</dbReference>
<dbReference type="InterPro" id="IPR036191">
    <property type="entry name" value="RRF_sf"/>
</dbReference>
<dbReference type="PANTHER" id="PTHR20982:SF3">
    <property type="entry name" value="MITOCHONDRIAL RIBOSOME RECYCLING FACTOR PSEUDO 1"/>
    <property type="match status" value="1"/>
</dbReference>
<dbReference type="PANTHER" id="PTHR20982">
    <property type="entry name" value="RIBOSOME RECYCLING FACTOR"/>
    <property type="match status" value="1"/>
</dbReference>
<dbReference type="Pfam" id="PF01765">
    <property type="entry name" value="RRF"/>
    <property type="match status" value="1"/>
</dbReference>
<dbReference type="SUPFAM" id="SSF55194">
    <property type="entry name" value="Ribosome recycling factor, RRF"/>
    <property type="match status" value="1"/>
</dbReference>
<proteinExistence type="inferred from homology"/>
<feature type="transit peptide" description="Mitochondrion" evidence="2">
    <location>
        <begin position="1"/>
        <end status="unknown"/>
    </location>
</feature>
<feature type="chain" id="PRO_0000167590" description="Ribosome-recycling factor, mitochondrial">
    <location>
        <begin status="unknown"/>
        <end position="238"/>
    </location>
</feature>
<sequence length="238" mass="26954">MIRLAVIRLAQGASRAQFLQKQAQIFTSAVVNAKKKADNKKKNPPAVFSNLEENAVVQETIKEIQRVEGLLVEELTRHFSLKVDIRQYEDVMVKLENGKDKPLSMIARVTLKSPLMIMINFQDNPSAIKAAKLAIQKSTLNVTPQQEGAVLYVNVPPMSKERREKMASDAKGRILNEYKKAINEIYSKSDKKSSNEFSTRPDEAKKTREALLNMKHAAEQRGGLLIEERRKQLLKQVV</sequence>
<gene>
    <name evidence="4" type="primary">mrrf-1</name>
    <name evidence="4" type="ORF">T20F5.3</name>
</gene>
<accession>P91478</accession>